<name>TRUB_VIBA3</name>
<gene>
    <name evidence="1" type="primary">truB</name>
    <name type="ordered locus">VS_2480</name>
</gene>
<proteinExistence type="inferred from homology"/>
<feature type="chain" id="PRO_1000149835" description="tRNA pseudouridine synthase B">
    <location>
        <begin position="1"/>
        <end position="317"/>
    </location>
</feature>
<feature type="active site" description="Nucleophile" evidence="1">
    <location>
        <position position="47"/>
    </location>
</feature>
<accession>B7VJH5</accession>
<reference key="1">
    <citation type="submission" date="2009-02" db="EMBL/GenBank/DDBJ databases">
        <title>Vibrio splendidus str. LGP32 complete genome.</title>
        <authorList>
            <person name="Mazel D."/>
            <person name="Le Roux F."/>
        </authorList>
    </citation>
    <scope>NUCLEOTIDE SEQUENCE [LARGE SCALE GENOMIC DNA]</scope>
    <source>
        <strain>LGP32</strain>
    </source>
</reference>
<protein>
    <recommendedName>
        <fullName evidence="1">tRNA pseudouridine synthase B</fullName>
        <ecNumber evidence="1">5.4.99.25</ecNumber>
    </recommendedName>
    <alternativeName>
        <fullName evidence="1">tRNA pseudouridine(55) synthase</fullName>
        <shortName evidence="1">Psi55 synthase</shortName>
    </alternativeName>
    <alternativeName>
        <fullName evidence="1">tRNA pseudouridylate synthase</fullName>
    </alternativeName>
    <alternativeName>
        <fullName evidence="1">tRNA-uridine isomerase</fullName>
    </alternativeName>
</protein>
<comment type="function">
    <text evidence="1">Responsible for synthesis of pseudouridine from uracil-55 in the psi GC loop of transfer RNAs.</text>
</comment>
<comment type="catalytic activity">
    <reaction evidence="1">
        <text>uridine(55) in tRNA = pseudouridine(55) in tRNA</text>
        <dbReference type="Rhea" id="RHEA:42532"/>
        <dbReference type="Rhea" id="RHEA-COMP:10101"/>
        <dbReference type="Rhea" id="RHEA-COMP:10102"/>
        <dbReference type="ChEBI" id="CHEBI:65314"/>
        <dbReference type="ChEBI" id="CHEBI:65315"/>
        <dbReference type="EC" id="5.4.99.25"/>
    </reaction>
</comment>
<comment type="similarity">
    <text evidence="1">Belongs to the pseudouridine synthase TruB family. Type 1 subfamily.</text>
</comment>
<organism>
    <name type="scientific">Vibrio atlanticus (strain LGP32)</name>
    <name type="common">Vibrio splendidus (strain Mel32)</name>
    <dbReference type="NCBI Taxonomy" id="575788"/>
    <lineage>
        <taxon>Bacteria</taxon>
        <taxon>Pseudomonadati</taxon>
        <taxon>Pseudomonadota</taxon>
        <taxon>Gammaproteobacteria</taxon>
        <taxon>Vibrionales</taxon>
        <taxon>Vibrionaceae</taxon>
        <taxon>Vibrio</taxon>
    </lineage>
</organism>
<sequence length="317" mass="35176">MARRRKGRPINGVILLDKPTGISSNDALQKVKRIYFAEKAGHTGALDPLATGMLPICLGEATKFSQFLLDSDKRYVVIAKLGERTNTSDSDGEVVETRDVNVTQEQLERCIASFKGETDQIPSMFSALKYQGKPLYEYARAGIEVPRESRKITVYSIELLRFEGDEVEMEVHCSKGTYIRTITDDLGEMLGCGAHVTMLRRTGVAKYPYDRMVTLEQLNEILEQAQAQEIAPKELLDPLLMPMDTAVEDLPEVNLNAELTDLVQHGMPVQVSGAPTEGTVRMTSGEEKLFVGVAQIAEDGRVAPKRLVVFRDEEPQA</sequence>
<dbReference type="EC" id="5.4.99.25" evidence="1"/>
<dbReference type="EMBL" id="FM954972">
    <property type="protein sequence ID" value="CAV19639.1"/>
    <property type="molecule type" value="Genomic_DNA"/>
</dbReference>
<dbReference type="SMR" id="B7VJH5"/>
<dbReference type="STRING" id="575788.VS_2480"/>
<dbReference type="KEGG" id="vsp:VS_2480"/>
<dbReference type="PATRIC" id="fig|575788.5.peg.3740"/>
<dbReference type="eggNOG" id="COG0130">
    <property type="taxonomic scope" value="Bacteria"/>
</dbReference>
<dbReference type="HOGENOM" id="CLU_032087_0_3_6"/>
<dbReference type="Proteomes" id="UP000009100">
    <property type="component" value="Chromosome 1"/>
</dbReference>
<dbReference type="GO" id="GO:0003723">
    <property type="term" value="F:RNA binding"/>
    <property type="evidence" value="ECO:0007669"/>
    <property type="project" value="InterPro"/>
</dbReference>
<dbReference type="GO" id="GO:0160148">
    <property type="term" value="F:tRNA pseudouridine(55) synthase activity"/>
    <property type="evidence" value="ECO:0007669"/>
    <property type="project" value="UniProtKB-EC"/>
</dbReference>
<dbReference type="GO" id="GO:1990481">
    <property type="term" value="P:mRNA pseudouridine synthesis"/>
    <property type="evidence" value="ECO:0007669"/>
    <property type="project" value="TreeGrafter"/>
</dbReference>
<dbReference type="GO" id="GO:0031119">
    <property type="term" value="P:tRNA pseudouridine synthesis"/>
    <property type="evidence" value="ECO:0007669"/>
    <property type="project" value="UniProtKB-UniRule"/>
</dbReference>
<dbReference type="CDD" id="cd02573">
    <property type="entry name" value="PseudoU_synth_EcTruB"/>
    <property type="match status" value="1"/>
</dbReference>
<dbReference type="CDD" id="cd21152">
    <property type="entry name" value="PUA_TruB_bacterial"/>
    <property type="match status" value="1"/>
</dbReference>
<dbReference type="FunFam" id="2.30.130.10:FF:000004">
    <property type="entry name" value="tRNA pseudouridine synthase B"/>
    <property type="match status" value="1"/>
</dbReference>
<dbReference type="FunFam" id="3.30.2350.10:FF:000003">
    <property type="entry name" value="tRNA pseudouridine synthase B"/>
    <property type="match status" value="1"/>
</dbReference>
<dbReference type="Gene3D" id="3.30.2350.10">
    <property type="entry name" value="Pseudouridine synthase"/>
    <property type="match status" value="1"/>
</dbReference>
<dbReference type="Gene3D" id="2.30.130.10">
    <property type="entry name" value="PUA domain"/>
    <property type="match status" value="1"/>
</dbReference>
<dbReference type="HAMAP" id="MF_01080">
    <property type="entry name" value="TruB_bact"/>
    <property type="match status" value="1"/>
</dbReference>
<dbReference type="InterPro" id="IPR020103">
    <property type="entry name" value="PsdUridine_synth_cat_dom_sf"/>
</dbReference>
<dbReference type="InterPro" id="IPR002501">
    <property type="entry name" value="PsdUridine_synth_N"/>
</dbReference>
<dbReference type="InterPro" id="IPR015947">
    <property type="entry name" value="PUA-like_sf"/>
</dbReference>
<dbReference type="InterPro" id="IPR036974">
    <property type="entry name" value="PUA_sf"/>
</dbReference>
<dbReference type="InterPro" id="IPR014780">
    <property type="entry name" value="tRNA_psdUridine_synth_TruB"/>
</dbReference>
<dbReference type="InterPro" id="IPR015240">
    <property type="entry name" value="tRNA_sdUridine_synth_fam1_C"/>
</dbReference>
<dbReference type="InterPro" id="IPR032819">
    <property type="entry name" value="TruB_C"/>
</dbReference>
<dbReference type="NCBIfam" id="TIGR00431">
    <property type="entry name" value="TruB"/>
    <property type="match status" value="1"/>
</dbReference>
<dbReference type="PANTHER" id="PTHR13767:SF2">
    <property type="entry name" value="PSEUDOURIDYLATE SYNTHASE TRUB1"/>
    <property type="match status" value="1"/>
</dbReference>
<dbReference type="PANTHER" id="PTHR13767">
    <property type="entry name" value="TRNA-PSEUDOURIDINE SYNTHASE"/>
    <property type="match status" value="1"/>
</dbReference>
<dbReference type="Pfam" id="PF09157">
    <property type="entry name" value="TruB-C_2"/>
    <property type="match status" value="1"/>
</dbReference>
<dbReference type="Pfam" id="PF16198">
    <property type="entry name" value="TruB_C_2"/>
    <property type="match status" value="1"/>
</dbReference>
<dbReference type="Pfam" id="PF01509">
    <property type="entry name" value="TruB_N"/>
    <property type="match status" value="1"/>
</dbReference>
<dbReference type="SUPFAM" id="SSF55120">
    <property type="entry name" value="Pseudouridine synthase"/>
    <property type="match status" value="1"/>
</dbReference>
<dbReference type="SUPFAM" id="SSF88697">
    <property type="entry name" value="PUA domain-like"/>
    <property type="match status" value="1"/>
</dbReference>
<evidence type="ECO:0000255" key="1">
    <source>
        <dbReference type="HAMAP-Rule" id="MF_01080"/>
    </source>
</evidence>
<keyword id="KW-0413">Isomerase</keyword>
<keyword id="KW-0819">tRNA processing</keyword>